<feature type="chain" id="PRO_0000112945" description="Ornithine carbamoyltransferase">
    <location>
        <begin position="1"/>
        <end position="316"/>
    </location>
</feature>
<feature type="binding site" evidence="2">
    <location>
        <begin position="59"/>
        <end position="62"/>
    </location>
    <ligand>
        <name>carbamoyl phosphate</name>
        <dbReference type="ChEBI" id="CHEBI:58228"/>
    </ligand>
</feature>
<feature type="binding site" evidence="2">
    <location>
        <position position="86"/>
    </location>
    <ligand>
        <name>carbamoyl phosphate</name>
        <dbReference type="ChEBI" id="CHEBI:58228"/>
    </ligand>
</feature>
<feature type="binding site" evidence="2">
    <location>
        <position position="110"/>
    </location>
    <ligand>
        <name>carbamoyl phosphate</name>
        <dbReference type="ChEBI" id="CHEBI:58228"/>
    </ligand>
</feature>
<feature type="binding site" evidence="2">
    <location>
        <begin position="137"/>
        <end position="140"/>
    </location>
    <ligand>
        <name>carbamoyl phosphate</name>
        <dbReference type="ChEBI" id="CHEBI:58228"/>
    </ligand>
</feature>
<feature type="binding site" evidence="2">
    <location>
        <position position="168"/>
    </location>
    <ligand>
        <name>L-ornithine</name>
        <dbReference type="ChEBI" id="CHEBI:46911"/>
    </ligand>
</feature>
<feature type="binding site" evidence="2">
    <location>
        <position position="232"/>
    </location>
    <ligand>
        <name>L-ornithine</name>
        <dbReference type="ChEBI" id="CHEBI:46911"/>
    </ligand>
</feature>
<feature type="binding site" evidence="2">
    <location>
        <begin position="236"/>
        <end position="237"/>
    </location>
    <ligand>
        <name>L-ornithine</name>
        <dbReference type="ChEBI" id="CHEBI:46911"/>
    </ligand>
</feature>
<feature type="binding site" evidence="2">
    <location>
        <begin position="273"/>
        <end position="274"/>
    </location>
    <ligand>
        <name>carbamoyl phosphate</name>
        <dbReference type="ChEBI" id="CHEBI:58228"/>
    </ligand>
</feature>
<feature type="binding site" evidence="2">
    <location>
        <position position="301"/>
    </location>
    <ligand>
        <name>carbamoyl phosphate</name>
        <dbReference type="ChEBI" id="CHEBI:58228"/>
    </ligand>
</feature>
<sequence length="316" mass="35041">MTMYAKNNTSGKDMLSLLEWNKEELTDIIKLAVAMKTNPAHYSHILSGKILGMIFDKPSTRTRVSFEAGILQLGGQAIVMSSKELQIGRGEPIKDTAHVMSEYIDAIMIRTFSHEKVEELAYHAEIPIINGLTDLHHPCQALADLMTIYEWKDQLEGIKLAYIGDGNNVCHSLLLAGAMVGIDIRLAMPKGYEVDETILAKAENLAKQSGGKIFVTEDSKLAVTDADFIYTDVWTSMGQEDENAKRLADFGEKYQVNAELVSGAKPDYHFLHCLPAHREEEVTTEIIDGIHSVIYQQAGNRLHAQKALLAAILEAK</sequence>
<name>OTC_LISMO</name>
<evidence type="ECO:0000250" key="1"/>
<evidence type="ECO:0000255" key="2">
    <source>
        <dbReference type="HAMAP-Rule" id="MF_01109"/>
    </source>
</evidence>
<evidence type="ECO:0000305" key="3"/>
<protein>
    <recommendedName>
        <fullName>Ornithine carbamoyltransferase</fullName>
        <shortName>OTCase</shortName>
        <ecNumber>2.1.3.3</ecNumber>
    </recommendedName>
</protein>
<dbReference type="EC" id="2.1.3.3"/>
<dbReference type="EMBL" id="AL591979">
    <property type="protein sequence ID" value="CAC99665.1"/>
    <property type="molecule type" value="Genomic_DNA"/>
</dbReference>
<dbReference type="PIR" id="AC1273">
    <property type="entry name" value="AC1273"/>
</dbReference>
<dbReference type="RefSeq" id="NP_465112.1">
    <property type="nucleotide sequence ID" value="NC_003210.1"/>
</dbReference>
<dbReference type="RefSeq" id="WP_010989752.1">
    <property type="nucleotide sequence ID" value="NZ_CP149495.1"/>
</dbReference>
<dbReference type="SMR" id="Q8Y6U5"/>
<dbReference type="STRING" id="169963.gene:17594244"/>
<dbReference type="PaxDb" id="169963-lmo1587"/>
<dbReference type="EnsemblBacteria" id="CAC99665">
    <property type="protein sequence ID" value="CAC99665"/>
    <property type="gene ID" value="CAC99665"/>
</dbReference>
<dbReference type="GeneID" id="987773"/>
<dbReference type="KEGG" id="lmo:lmo1587"/>
<dbReference type="PATRIC" id="fig|169963.11.peg.1629"/>
<dbReference type="eggNOG" id="COG0078">
    <property type="taxonomic scope" value="Bacteria"/>
</dbReference>
<dbReference type="HOGENOM" id="CLU_043846_3_2_9"/>
<dbReference type="OrthoDB" id="9802587at2"/>
<dbReference type="PhylomeDB" id="Q8Y6U5"/>
<dbReference type="BioCyc" id="LMON169963:LMO1587-MONOMER"/>
<dbReference type="UniPathway" id="UPA00068">
    <property type="reaction ID" value="UER00112"/>
</dbReference>
<dbReference type="Proteomes" id="UP000000817">
    <property type="component" value="Chromosome"/>
</dbReference>
<dbReference type="GO" id="GO:0005737">
    <property type="term" value="C:cytoplasm"/>
    <property type="evidence" value="ECO:0007669"/>
    <property type="project" value="UniProtKB-SubCell"/>
</dbReference>
<dbReference type="GO" id="GO:0016597">
    <property type="term" value="F:amino acid binding"/>
    <property type="evidence" value="ECO:0007669"/>
    <property type="project" value="InterPro"/>
</dbReference>
<dbReference type="GO" id="GO:0004585">
    <property type="term" value="F:ornithine carbamoyltransferase activity"/>
    <property type="evidence" value="ECO:0000318"/>
    <property type="project" value="GO_Central"/>
</dbReference>
<dbReference type="GO" id="GO:0042450">
    <property type="term" value="P:arginine biosynthetic process via ornithine"/>
    <property type="evidence" value="ECO:0000318"/>
    <property type="project" value="GO_Central"/>
</dbReference>
<dbReference type="GO" id="GO:0019240">
    <property type="term" value="P:citrulline biosynthetic process"/>
    <property type="evidence" value="ECO:0000318"/>
    <property type="project" value="GO_Central"/>
</dbReference>
<dbReference type="GO" id="GO:0006526">
    <property type="term" value="P:L-arginine biosynthetic process"/>
    <property type="evidence" value="ECO:0007669"/>
    <property type="project" value="UniProtKB-UniRule"/>
</dbReference>
<dbReference type="FunFam" id="3.40.50.1370:FF:000008">
    <property type="entry name" value="Ornithine carbamoyltransferase"/>
    <property type="match status" value="1"/>
</dbReference>
<dbReference type="FunFam" id="3.40.50.1370:FF:000016">
    <property type="entry name" value="Ornithine carbamoyltransferase"/>
    <property type="match status" value="1"/>
</dbReference>
<dbReference type="Gene3D" id="3.40.50.1370">
    <property type="entry name" value="Aspartate/ornithine carbamoyltransferase"/>
    <property type="match status" value="2"/>
</dbReference>
<dbReference type="HAMAP" id="MF_01109">
    <property type="entry name" value="OTCase"/>
    <property type="match status" value="1"/>
</dbReference>
<dbReference type="InterPro" id="IPR006132">
    <property type="entry name" value="Asp/Orn_carbamoyltranf_P-bd"/>
</dbReference>
<dbReference type="InterPro" id="IPR006130">
    <property type="entry name" value="Asp/Orn_carbamoylTrfase"/>
</dbReference>
<dbReference type="InterPro" id="IPR036901">
    <property type="entry name" value="Asp/Orn_carbamoylTrfase_sf"/>
</dbReference>
<dbReference type="InterPro" id="IPR006131">
    <property type="entry name" value="Asp_carbamoyltransf_Asp/Orn-bd"/>
</dbReference>
<dbReference type="InterPro" id="IPR002292">
    <property type="entry name" value="Orn/put_carbamltrans"/>
</dbReference>
<dbReference type="InterPro" id="IPR024904">
    <property type="entry name" value="OTCase_ArgI"/>
</dbReference>
<dbReference type="NCBIfam" id="TIGR00658">
    <property type="entry name" value="orni_carb_tr"/>
    <property type="match status" value="1"/>
</dbReference>
<dbReference type="NCBIfam" id="NF001986">
    <property type="entry name" value="PRK00779.1"/>
    <property type="match status" value="1"/>
</dbReference>
<dbReference type="PANTHER" id="PTHR45753">
    <property type="entry name" value="ORNITHINE CARBAMOYLTRANSFERASE, MITOCHONDRIAL"/>
    <property type="match status" value="1"/>
</dbReference>
<dbReference type="PANTHER" id="PTHR45753:SF3">
    <property type="entry name" value="ORNITHINE TRANSCARBAMYLASE, MITOCHONDRIAL"/>
    <property type="match status" value="1"/>
</dbReference>
<dbReference type="Pfam" id="PF00185">
    <property type="entry name" value="OTCace"/>
    <property type="match status" value="1"/>
</dbReference>
<dbReference type="Pfam" id="PF02729">
    <property type="entry name" value="OTCace_N"/>
    <property type="match status" value="1"/>
</dbReference>
<dbReference type="PRINTS" id="PR00100">
    <property type="entry name" value="AOTCASE"/>
</dbReference>
<dbReference type="PRINTS" id="PR00102">
    <property type="entry name" value="OTCASE"/>
</dbReference>
<dbReference type="SUPFAM" id="SSF53671">
    <property type="entry name" value="Aspartate/ornithine carbamoyltransferase"/>
    <property type="match status" value="1"/>
</dbReference>
<dbReference type="PROSITE" id="PS00097">
    <property type="entry name" value="CARBAMOYLTRANSFERASE"/>
    <property type="match status" value="1"/>
</dbReference>
<reference key="1">
    <citation type="journal article" date="2001" name="Science">
        <title>Comparative genomics of Listeria species.</title>
        <authorList>
            <person name="Glaser P."/>
            <person name="Frangeul L."/>
            <person name="Buchrieser C."/>
            <person name="Rusniok C."/>
            <person name="Amend A."/>
            <person name="Baquero F."/>
            <person name="Berche P."/>
            <person name="Bloecker H."/>
            <person name="Brandt P."/>
            <person name="Chakraborty T."/>
            <person name="Charbit A."/>
            <person name="Chetouani F."/>
            <person name="Couve E."/>
            <person name="de Daruvar A."/>
            <person name="Dehoux P."/>
            <person name="Domann E."/>
            <person name="Dominguez-Bernal G."/>
            <person name="Duchaud E."/>
            <person name="Durant L."/>
            <person name="Dussurget O."/>
            <person name="Entian K.-D."/>
            <person name="Fsihi H."/>
            <person name="Garcia-del Portillo F."/>
            <person name="Garrido P."/>
            <person name="Gautier L."/>
            <person name="Goebel W."/>
            <person name="Gomez-Lopez N."/>
            <person name="Hain T."/>
            <person name="Hauf J."/>
            <person name="Jackson D."/>
            <person name="Jones L.-M."/>
            <person name="Kaerst U."/>
            <person name="Kreft J."/>
            <person name="Kuhn M."/>
            <person name="Kunst F."/>
            <person name="Kurapkat G."/>
            <person name="Madueno E."/>
            <person name="Maitournam A."/>
            <person name="Mata Vicente J."/>
            <person name="Ng E."/>
            <person name="Nedjari H."/>
            <person name="Nordsiek G."/>
            <person name="Novella S."/>
            <person name="de Pablos B."/>
            <person name="Perez-Diaz J.-C."/>
            <person name="Purcell R."/>
            <person name="Remmel B."/>
            <person name="Rose M."/>
            <person name="Schlueter T."/>
            <person name="Simoes N."/>
            <person name="Tierrez A."/>
            <person name="Vazquez-Boland J.-A."/>
            <person name="Voss H."/>
            <person name="Wehland J."/>
            <person name="Cossart P."/>
        </authorList>
    </citation>
    <scope>NUCLEOTIDE SEQUENCE [LARGE SCALE GENOMIC DNA]</scope>
    <source>
        <strain>ATCC BAA-679 / EGD-e</strain>
    </source>
</reference>
<keyword id="KW-0028">Amino-acid biosynthesis</keyword>
<keyword id="KW-0055">Arginine biosynthesis</keyword>
<keyword id="KW-0963">Cytoplasm</keyword>
<keyword id="KW-1185">Reference proteome</keyword>
<keyword id="KW-0808">Transferase</keyword>
<gene>
    <name type="primary">argF</name>
    <name type="ordered locus">lmo1587</name>
</gene>
<proteinExistence type="inferred from homology"/>
<accession>Q8Y6U5</accession>
<comment type="function">
    <text evidence="1">Reversibly catalyzes the transfer of the carbamoyl group from carbamoyl phosphate (CP) to the N(epsilon) atom of ornithine (ORN) to produce L-citrulline.</text>
</comment>
<comment type="catalytic activity">
    <reaction>
        <text>carbamoyl phosphate + L-ornithine = L-citrulline + phosphate + H(+)</text>
        <dbReference type="Rhea" id="RHEA:19513"/>
        <dbReference type="ChEBI" id="CHEBI:15378"/>
        <dbReference type="ChEBI" id="CHEBI:43474"/>
        <dbReference type="ChEBI" id="CHEBI:46911"/>
        <dbReference type="ChEBI" id="CHEBI:57743"/>
        <dbReference type="ChEBI" id="CHEBI:58228"/>
        <dbReference type="EC" id="2.1.3.3"/>
    </reaction>
</comment>
<comment type="pathway">
    <text>Amino-acid biosynthesis; L-arginine biosynthesis; L-arginine from L-ornithine and carbamoyl phosphate: step 1/3.</text>
</comment>
<comment type="subcellular location">
    <subcellularLocation>
        <location evidence="1">Cytoplasm</location>
    </subcellularLocation>
</comment>
<comment type="similarity">
    <text evidence="3">Belongs to the aspartate/ornithine carbamoyltransferase superfamily. OTCase family.</text>
</comment>
<organism>
    <name type="scientific">Listeria monocytogenes serovar 1/2a (strain ATCC BAA-679 / EGD-e)</name>
    <dbReference type="NCBI Taxonomy" id="169963"/>
    <lineage>
        <taxon>Bacteria</taxon>
        <taxon>Bacillati</taxon>
        <taxon>Bacillota</taxon>
        <taxon>Bacilli</taxon>
        <taxon>Bacillales</taxon>
        <taxon>Listeriaceae</taxon>
        <taxon>Listeria</taxon>
    </lineage>
</organism>